<name>MIAA_MYCTA</name>
<sequence>MRPLAIIGPTGAGKSQLALDVAARLGARVSVEIVNADAMQLYRGMDIGTAKLPVSERRGIPHHQLDVLDVTETATVARYQRAAAADIEAIAARGAVPVVVGGSMLYVQSLLDDWSFPATDPSVRARWERRLAEVGVDRLHAELARRDPAAAAAILPTDARRTVRALEVVELTGQPFAASAPRIGAPRWDTVIVGLDCQTTILDERLARRTDLMFDQGLVEEVRTLLRNGLREGVTASRALGYAQVIAALDAGAGADMMRAAREQTYLGTRRYVRRQRSWFRRDHRVHWLDAGVASSPDRARLVDDAVRLWRHVT</sequence>
<accession>A5U679</accession>
<evidence type="ECO:0000255" key="1">
    <source>
        <dbReference type="HAMAP-Rule" id="MF_00185"/>
    </source>
</evidence>
<reference key="1">
    <citation type="journal article" date="2008" name="PLoS ONE">
        <title>Genetic basis of virulence attenuation revealed by comparative genomic analysis of Mycobacterium tuberculosis strain H37Ra versus H37Rv.</title>
        <authorList>
            <person name="Zheng H."/>
            <person name="Lu L."/>
            <person name="Wang B."/>
            <person name="Pu S."/>
            <person name="Zhang X."/>
            <person name="Zhu G."/>
            <person name="Shi W."/>
            <person name="Zhang L."/>
            <person name="Wang H."/>
            <person name="Wang S."/>
            <person name="Zhao G."/>
            <person name="Zhang Y."/>
        </authorList>
    </citation>
    <scope>NUCLEOTIDE SEQUENCE [LARGE SCALE GENOMIC DNA]</scope>
    <source>
        <strain>ATCC 25177 / H37Ra</strain>
    </source>
</reference>
<organism>
    <name type="scientific">Mycobacterium tuberculosis (strain ATCC 25177 / H37Ra)</name>
    <dbReference type="NCBI Taxonomy" id="419947"/>
    <lineage>
        <taxon>Bacteria</taxon>
        <taxon>Bacillati</taxon>
        <taxon>Actinomycetota</taxon>
        <taxon>Actinomycetes</taxon>
        <taxon>Mycobacteriales</taxon>
        <taxon>Mycobacteriaceae</taxon>
        <taxon>Mycobacterium</taxon>
        <taxon>Mycobacterium tuberculosis complex</taxon>
    </lineage>
</organism>
<protein>
    <recommendedName>
        <fullName evidence="1">tRNA dimethylallyltransferase</fullName>
        <ecNumber evidence="1">2.5.1.75</ecNumber>
    </recommendedName>
    <alternativeName>
        <fullName evidence="1">Dimethylallyl diphosphate:tRNA dimethylallyltransferase</fullName>
        <shortName evidence="1">DMAPP:tRNA dimethylallyltransferase</shortName>
        <shortName evidence="1">DMATase</shortName>
    </alternativeName>
    <alternativeName>
        <fullName evidence="1">Isopentenyl-diphosphate:tRNA isopentenyltransferase</fullName>
        <shortName evidence="1">IPP transferase</shortName>
        <shortName evidence="1">IPPT</shortName>
        <shortName evidence="1">IPTase</shortName>
    </alternativeName>
</protein>
<gene>
    <name evidence="1" type="primary">miaA</name>
    <name type="ordered locus">MRA_2754</name>
</gene>
<keyword id="KW-0067">ATP-binding</keyword>
<keyword id="KW-0460">Magnesium</keyword>
<keyword id="KW-0547">Nucleotide-binding</keyword>
<keyword id="KW-1185">Reference proteome</keyword>
<keyword id="KW-0808">Transferase</keyword>
<keyword id="KW-0819">tRNA processing</keyword>
<comment type="function">
    <text evidence="1">Catalyzes the transfer of a dimethylallyl group onto the adenine at position 37 in tRNAs that read codons beginning with uridine, leading to the formation of N6-(dimethylallyl)adenosine (i(6)A).</text>
</comment>
<comment type="catalytic activity">
    <reaction evidence="1">
        <text>adenosine(37) in tRNA + dimethylallyl diphosphate = N(6)-dimethylallyladenosine(37) in tRNA + diphosphate</text>
        <dbReference type="Rhea" id="RHEA:26482"/>
        <dbReference type="Rhea" id="RHEA-COMP:10162"/>
        <dbReference type="Rhea" id="RHEA-COMP:10375"/>
        <dbReference type="ChEBI" id="CHEBI:33019"/>
        <dbReference type="ChEBI" id="CHEBI:57623"/>
        <dbReference type="ChEBI" id="CHEBI:74411"/>
        <dbReference type="ChEBI" id="CHEBI:74415"/>
        <dbReference type="EC" id="2.5.1.75"/>
    </reaction>
</comment>
<comment type="cofactor">
    <cofactor evidence="1">
        <name>Mg(2+)</name>
        <dbReference type="ChEBI" id="CHEBI:18420"/>
    </cofactor>
</comment>
<comment type="subunit">
    <text evidence="1">Monomer.</text>
</comment>
<comment type="similarity">
    <text evidence="1">Belongs to the IPP transferase family.</text>
</comment>
<proteinExistence type="inferred from homology"/>
<feature type="chain" id="PRO_1000020622" description="tRNA dimethylallyltransferase">
    <location>
        <begin position="1"/>
        <end position="314"/>
    </location>
</feature>
<feature type="binding site" evidence="1">
    <location>
        <begin position="8"/>
        <end position="15"/>
    </location>
    <ligand>
        <name>ATP</name>
        <dbReference type="ChEBI" id="CHEBI:30616"/>
    </ligand>
</feature>
<feature type="binding site" evidence="1">
    <location>
        <begin position="10"/>
        <end position="15"/>
    </location>
    <ligand>
        <name>substrate</name>
    </ligand>
</feature>
<feature type="site" description="Interaction with substrate tRNA" evidence="1">
    <location>
        <position position="103"/>
    </location>
</feature>
<feature type="site" description="Interaction with substrate tRNA" evidence="1">
    <location>
        <position position="124"/>
    </location>
</feature>
<dbReference type="EC" id="2.5.1.75" evidence="1"/>
<dbReference type="EMBL" id="CP000611">
    <property type="protein sequence ID" value="ABQ74529.1"/>
    <property type="molecule type" value="Genomic_DNA"/>
</dbReference>
<dbReference type="RefSeq" id="WP_003413989.1">
    <property type="nucleotide sequence ID" value="NZ_CP016972.1"/>
</dbReference>
<dbReference type="SMR" id="A5U679"/>
<dbReference type="GeneID" id="45426714"/>
<dbReference type="KEGG" id="mra:MRA_2754"/>
<dbReference type="eggNOG" id="COG0324">
    <property type="taxonomic scope" value="Bacteria"/>
</dbReference>
<dbReference type="HOGENOM" id="CLU_032616_0_1_11"/>
<dbReference type="Proteomes" id="UP000001988">
    <property type="component" value="Chromosome"/>
</dbReference>
<dbReference type="GO" id="GO:0005524">
    <property type="term" value="F:ATP binding"/>
    <property type="evidence" value="ECO:0007669"/>
    <property type="project" value="UniProtKB-UniRule"/>
</dbReference>
<dbReference type="GO" id="GO:0052381">
    <property type="term" value="F:tRNA dimethylallyltransferase activity"/>
    <property type="evidence" value="ECO:0007669"/>
    <property type="project" value="UniProtKB-UniRule"/>
</dbReference>
<dbReference type="GO" id="GO:0006400">
    <property type="term" value="P:tRNA modification"/>
    <property type="evidence" value="ECO:0007669"/>
    <property type="project" value="TreeGrafter"/>
</dbReference>
<dbReference type="FunFam" id="1.10.20.140:FF:000001">
    <property type="entry name" value="tRNA dimethylallyltransferase"/>
    <property type="match status" value="1"/>
</dbReference>
<dbReference type="Gene3D" id="1.10.20.140">
    <property type="match status" value="1"/>
</dbReference>
<dbReference type="Gene3D" id="3.40.50.300">
    <property type="entry name" value="P-loop containing nucleotide triphosphate hydrolases"/>
    <property type="match status" value="1"/>
</dbReference>
<dbReference type="HAMAP" id="MF_00185">
    <property type="entry name" value="IPP_trans"/>
    <property type="match status" value="1"/>
</dbReference>
<dbReference type="InterPro" id="IPR039657">
    <property type="entry name" value="Dimethylallyltransferase"/>
</dbReference>
<dbReference type="InterPro" id="IPR018022">
    <property type="entry name" value="IPT"/>
</dbReference>
<dbReference type="InterPro" id="IPR027417">
    <property type="entry name" value="P-loop_NTPase"/>
</dbReference>
<dbReference type="NCBIfam" id="TIGR00174">
    <property type="entry name" value="miaA"/>
    <property type="match status" value="1"/>
</dbReference>
<dbReference type="PANTHER" id="PTHR11088">
    <property type="entry name" value="TRNA DIMETHYLALLYLTRANSFERASE"/>
    <property type="match status" value="1"/>
</dbReference>
<dbReference type="PANTHER" id="PTHR11088:SF60">
    <property type="entry name" value="TRNA DIMETHYLALLYLTRANSFERASE"/>
    <property type="match status" value="1"/>
</dbReference>
<dbReference type="Pfam" id="PF01715">
    <property type="entry name" value="IPPT"/>
    <property type="match status" value="1"/>
</dbReference>
<dbReference type="SUPFAM" id="SSF52540">
    <property type="entry name" value="P-loop containing nucleoside triphosphate hydrolases"/>
    <property type="match status" value="1"/>
</dbReference>